<feature type="chain" id="PRO_1000086832" description="Small ribosomal subunit protein uS17">
    <location>
        <begin position="1"/>
        <end position="80"/>
    </location>
</feature>
<accession>B0CH23</accession>
<gene>
    <name evidence="1" type="primary">rpsQ</name>
    <name type="ordered locus">BSUIS_A1273</name>
</gene>
<name>RS17_BRUSI</name>
<proteinExistence type="inferred from homology"/>
<comment type="function">
    <text evidence="1">One of the primary rRNA binding proteins, it binds specifically to the 5'-end of 16S ribosomal RNA.</text>
</comment>
<comment type="subunit">
    <text evidence="1">Part of the 30S ribosomal subunit.</text>
</comment>
<comment type="similarity">
    <text evidence="1">Belongs to the universal ribosomal protein uS17 family.</text>
</comment>
<organism>
    <name type="scientific">Brucella suis (strain ATCC 23445 / NCTC 10510)</name>
    <dbReference type="NCBI Taxonomy" id="470137"/>
    <lineage>
        <taxon>Bacteria</taxon>
        <taxon>Pseudomonadati</taxon>
        <taxon>Pseudomonadota</taxon>
        <taxon>Alphaproteobacteria</taxon>
        <taxon>Hyphomicrobiales</taxon>
        <taxon>Brucellaceae</taxon>
        <taxon>Brucella/Ochrobactrum group</taxon>
        <taxon>Brucella</taxon>
    </lineage>
</organism>
<protein>
    <recommendedName>
        <fullName evidence="1">Small ribosomal subunit protein uS17</fullName>
    </recommendedName>
    <alternativeName>
        <fullName evidence="2">30S ribosomal protein S17</fullName>
    </alternativeName>
</protein>
<dbReference type="EMBL" id="CP000911">
    <property type="protein sequence ID" value="ABY38324.1"/>
    <property type="molecule type" value="Genomic_DNA"/>
</dbReference>
<dbReference type="RefSeq" id="WP_006070955.1">
    <property type="nucleotide sequence ID" value="NC_010169.1"/>
</dbReference>
<dbReference type="SMR" id="B0CH23"/>
<dbReference type="KEGG" id="bmt:BSUIS_A1273"/>
<dbReference type="HOGENOM" id="CLU_073626_1_1_5"/>
<dbReference type="Proteomes" id="UP000008545">
    <property type="component" value="Chromosome I"/>
</dbReference>
<dbReference type="GO" id="GO:0022627">
    <property type="term" value="C:cytosolic small ribosomal subunit"/>
    <property type="evidence" value="ECO:0007669"/>
    <property type="project" value="TreeGrafter"/>
</dbReference>
<dbReference type="GO" id="GO:0019843">
    <property type="term" value="F:rRNA binding"/>
    <property type="evidence" value="ECO:0007669"/>
    <property type="project" value="UniProtKB-UniRule"/>
</dbReference>
<dbReference type="GO" id="GO:0003735">
    <property type="term" value="F:structural constituent of ribosome"/>
    <property type="evidence" value="ECO:0007669"/>
    <property type="project" value="InterPro"/>
</dbReference>
<dbReference type="GO" id="GO:0006412">
    <property type="term" value="P:translation"/>
    <property type="evidence" value="ECO:0007669"/>
    <property type="project" value="UniProtKB-UniRule"/>
</dbReference>
<dbReference type="CDD" id="cd00364">
    <property type="entry name" value="Ribosomal_uS17"/>
    <property type="match status" value="1"/>
</dbReference>
<dbReference type="Gene3D" id="2.40.50.140">
    <property type="entry name" value="Nucleic acid-binding proteins"/>
    <property type="match status" value="1"/>
</dbReference>
<dbReference type="HAMAP" id="MF_01345_B">
    <property type="entry name" value="Ribosomal_uS17_B"/>
    <property type="match status" value="1"/>
</dbReference>
<dbReference type="InterPro" id="IPR012340">
    <property type="entry name" value="NA-bd_OB-fold"/>
</dbReference>
<dbReference type="InterPro" id="IPR000266">
    <property type="entry name" value="Ribosomal_uS17"/>
</dbReference>
<dbReference type="InterPro" id="IPR019984">
    <property type="entry name" value="Ribosomal_uS17_bact/chlr"/>
</dbReference>
<dbReference type="NCBIfam" id="NF004123">
    <property type="entry name" value="PRK05610.1"/>
    <property type="match status" value="1"/>
</dbReference>
<dbReference type="NCBIfam" id="TIGR03635">
    <property type="entry name" value="uS17_bact"/>
    <property type="match status" value="1"/>
</dbReference>
<dbReference type="PANTHER" id="PTHR10744">
    <property type="entry name" value="40S RIBOSOMAL PROTEIN S11 FAMILY MEMBER"/>
    <property type="match status" value="1"/>
</dbReference>
<dbReference type="PANTHER" id="PTHR10744:SF1">
    <property type="entry name" value="SMALL RIBOSOMAL SUBUNIT PROTEIN US17M"/>
    <property type="match status" value="1"/>
</dbReference>
<dbReference type="Pfam" id="PF00366">
    <property type="entry name" value="Ribosomal_S17"/>
    <property type="match status" value="1"/>
</dbReference>
<dbReference type="PRINTS" id="PR00973">
    <property type="entry name" value="RIBOSOMALS17"/>
</dbReference>
<dbReference type="SUPFAM" id="SSF50249">
    <property type="entry name" value="Nucleic acid-binding proteins"/>
    <property type="match status" value="1"/>
</dbReference>
<evidence type="ECO:0000255" key="1">
    <source>
        <dbReference type="HAMAP-Rule" id="MF_01345"/>
    </source>
</evidence>
<evidence type="ECO:0000305" key="2"/>
<keyword id="KW-0687">Ribonucleoprotein</keyword>
<keyword id="KW-0689">Ribosomal protein</keyword>
<keyword id="KW-0694">RNA-binding</keyword>
<keyword id="KW-0699">rRNA-binding</keyword>
<reference key="1">
    <citation type="submission" date="2007-12" db="EMBL/GenBank/DDBJ databases">
        <title>Brucella suis ATCC 23445 whole genome shotgun sequencing project.</title>
        <authorList>
            <person name="Setubal J.C."/>
            <person name="Bowns C."/>
            <person name="Boyle S."/>
            <person name="Crasta O.R."/>
            <person name="Czar M.J."/>
            <person name="Dharmanolla C."/>
            <person name="Gillespie J.J."/>
            <person name="Kenyon R.W."/>
            <person name="Lu J."/>
            <person name="Mane S."/>
            <person name="Mohapatra S."/>
            <person name="Nagrani S."/>
            <person name="Purkayastha A."/>
            <person name="Rajasimha H.K."/>
            <person name="Shallom J.M."/>
            <person name="Shallom S."/>
            <person name="Shukla M."/>
            <person name="Snyder E.E."/>
            <person name="Sobral B.W."/>
            <person name="Wattam A.R."/>
            <person name="Will R."/>
            <person name="Williams K."/>
            <person name="Yoo H."/>
            <person name="Bruce D."/>
            <person name="Detter C."/>
            <person name="Munk C."/>
            <person name="Brettin T.S."/>
        </authorList>
    </citation>
    <scope>NUCLEOTIDE SEQUENCE [LARGE SCALE GENOMIC DNA]</scope>
    <source>
        <strain>ATCC 23445 / NCTC 10510</strain>
    </source>
</reference>
<sequence length="80" mass="9138">MPKRVLQGVVVSDKNDKTVVLKVERRYSHPLLQKTVRQSKKYKAHDENNQFKVGDFVSIQESAPISKDKRWVVLTSEAAG</sequence>